<comment type="function">
    <text evidence="1">Involved in the third step of the chorismate pathway, which leads to the biosynthesis of aromatic amino acids. Catalyzes the cis-dehydration of 3-dehydroquinate (DHQ) and introduces the first double bond of the aromatic ring to yield 3-dehydroshikimate.</text>
</comment>
<comment type="catalytic activity">
    <reaction evidence="1">
        <text>3-dehydroquinate = 3-dehydroshikimate + H2O</text>
        <dbReference type="Rhea" id="RHEA:21096"/>
        <dbReference type="ChEBI" id="CHEBI:15377"/>
        <dbReference type="ChEBI" id="CHEBI:16630"/>
        <dbReference type="ChEBI" id="CHEBI:32364"/>
        <dbReference type="EC" id="4.2.1.10"/>
    </reaction>
</comment>
<comment type="pathway">
    <text evidence="1">Metabolic intermediate biosynthesis; chorismate biosynthesis; chorismate from D-erythrose 4-phosphate and phosphoenolpyruvate: step 3/7.</text>
</comment>
<comment type="subunit">
    <text evidence="1">Homodimer.</text>
</comment>
<comment type="interaction">
    <interactant intactId="EBI-2207290">
        <id>P63588</id>
    </interactant>
    <interactant intactId="EBI-2207316">
        <id>P63544</id>
        <label>apt</label>
    </interactant>
    <organismsDiffer>false</organismsDiffer>
    <experiments>2</experiments>
</comment>
<comment type="interaction">
    <interactant intactId="EBI-2207290">
        <id>P63588</id>
    </interactant>
    <interactant intactId="EBI-2207079">
        <id>P95830</id>
        <label>dnaJ</label>
    </interactant>
    <organismsDiffer>false</organismsDiffer>
    <experiments>2</experiments>
</comment>
<comment type="interaction">
    <interactant intactId="EBI-2207290">
        <id>P63588</id>
    </interactant>
    <interactant intactId="EBI-2207053">
        <id>Q97SE5</id>
        <label>gatC</label>
    </interactant>
    <organismsDiffer>false</organismsDiffer>
    <experiments>2</experiments>
</comment>
<comment type="interaction">
    <interactant intactId="EBI-2207290">
        <id>P63588</id>
    </interactant>
    <interactant intactId="EBI-2206949">
        <id>Q97NV3</id>
        <label>groES</label>
    </interactant>
    <organismsDiffer>false</organismsDiffer>
    <experiments>2</experiments>
</comment>
<comment type="interaction">
    <interactant intactId="EBI-2207290">
        <id>P63588</id>
    </interactant>
    <interactant intactId="EBI-2207109">
        <id>P0CB75</id>
        <label>pyrF</label>
    </interactant>
    <organismsDiffer>false</organismsDiffer>
    <experiments>2</experiments>
</comment>
<comment type="interaction">
    <interactant intactId="EBI-2207290">
        <id>P63588</id>
    </interactant>
    <interactant intactId="EBI-2206697">
        <id>Q97NX6</id>
        <label>scpB</label>
    </interactant>
    <organismsDiffer>false</organismsDiffer>
    <experiments>2</experiments>
</comment>
<comment type="interaction">
    <interactant intactId="EBI-2207290">
        <id>P63588</id>
    </interactant>
    <interactant intactId="EBI-2206983">
        <id>Q97SR4</id>
        <label>uppS</label>
    </interactant>
    <organismsDiffer>false</organismsDiffer>
    <experiments>2</experiments>
</comment>
<comment type="similarity">
    <text evidence="1">Belongs to the type-I 3-dehydroquinase family.</text>
</comment>
<name>AROD_STRPN</name>
<protein>
    <recommendedName>
        <fullName evidence="1">3-dehydroquinate dehydratase</fullName>
        <shortName evidence="1">3-dehydroquinase</shortName>
        <ecNumber evidence="1">4.2.1.10</ecNumber>
    </recommendedName>
    <alternativeName>
        <fullName evidence="1">Type I DHQase</fullName>
    </alternativeName>
    <alternativeName>
        <fullName evidence="1">Type I dehydroquinase</fullName>
        <shortName evidence="1">DHQ1</shortName>
    </alternativeName>
</protein>
<accession>P63588</accession>
<accession>Q97Q54</accession>
<keyword id="KW-0028">Amino-acid biosynthesis</keyword>
<keyword id="KW-0057">Aromatic amino acid biosynthesis</keyword>
<keyword id="KW-0456">Lyase</keyword>
<keyword id="KW-1185">Reference proteome</keyword>
<keyword id="KW-0704">Schiff base</keyword>
<dbReference type="EC" id="4.2.1.10" evidence="1"/>
<dbReference type="EMBL" id="AE005672">
    <property type="protein sequence ID" value="AAK75475.1"/>
    <property type="molecule type" value="Genomic_DNA"/>
</dbReference>
<dbReference type="PIR" id="B95160">
    <property type="entry name" value="B95160"/>
</dbReference>
<dbReference type="RefSeq" id="WP_000767762.1">
    <property type="nucleotide sequence ID" value="NZ_CP155539.1"/>
</dbReference>
<dbReference type="SMR" id="P63588"/>
<dbReference type="IntAct" id="P63588">
    <property type="interactions" value="7"/>
</dbReference>
<dbReference type="PaxDb" id="170187-SP_1377"/>
<dbReference type="EnsemblBacteria" id="AAK75475">
    <property type="protein sequence ID" value="AAK75475"/>
    <property type="gene ID" value="SP_1377"/>
</dbReference>
<dbReference type="GeneID" id="45653363"/>
<dbReference type="KEGG" id="spn:SP_1377"/>
<dbReference type="eggNOG" id="COG0710">
    <property type="taxonomic scope" value="Bacteria"/>
</dbReference>
<dbReference type="PhylomeDB" id="P63588"/>
<dbReference type="BioCyc" id="SPNE170187:G1FZB-1386-MONOMER"/>
<dbReference type="UniPathway" id="UPA00053">
    <property type="reaction ID" value="UER00086"/>
</dbReference>
<dbReference type="Proteomes" id="UP000000585">
    <property type="component" value="Chromosome"/>
</dbReference>
<dbReference type="GO" id="GO:0003855">
    <property type="term" value="F:3-dehydroquinate dehydratase activity"/>
    <property type="evidence" value="ECO:0007669"/>
    <property type="project" value="UniProtKB-UniRule"/>
</dbReference>
<dbReference type="GO" id="GO:0046279">
    <property type="term" value="P:3,4-dihydroxybenzoate biosynthetic process"/>
    <property type="evidence" value="ECO:0007669"/>
    <property type="project" value="TreeGrafter"/>
</dbReference>
<dbReference type="GO" id="GO:0008652">
    <property type="term" value="P:amino acid biosynthetic process"/>
    <property type="evidence" value="ECO:0007669"/>
    <property type="project" value="UniProtKB-KW"/>
</dbReference>
<dbReference type="GO" id="GO:0009073">
    <property type="term" value="P:aromatic amino acid family biosynthetic process"/>
    <property type="evidence" value="ECO:0007669"/>
    <property type="project" value="UniProtKB-KW"/>
</dbReference>
<dbReference type="GO" id="GO:0009423">
    <property type="term" value="P:chorismate biosynthetic process"/>
    <property type="evidence" value="ECO:0007669"/>
    <property type="project" value="UniProtKB-UniRule"/>
</dbReference>
<dbReference type="CDD" id="cd00502">
    <property type="entry name" value="DHQase_I"/>
    <property type="match status" value="1"/>
</dbReference>
<dbReference type="FunFam" id="3.20.20.70:FF:000217">
    <property type="entry name" value="3-dehydroquinate dehydratase"/>
    <property type="match status" value="1"/>
</dbReference>
<dbReference type="Gene3D" id="3.20.20.70">
    <property type="entry name" value="Aldolase class I"/>
    <property type="match status" value="1"/>
</dbReference>
<dbReference type="HAMAP" id="MF_00214">
    <property type="entry name" value="AroD"/>
    <property type="match status" value="1"/>
</dbReference>
<dbReference type="InterPro" id="IPR013785">
    <property type="entry name" value="Aldolase_TIM"/>
</dbReference>
<dbReference type="InterPro" id="IPR001381">
    <property type="entry name" value="DHquinase_I"/>
</dbReference>
<dbReference type="InterPro" id="IPR050146">
    <property type="entry name" value="Type-I_3-dehydroquinase"/>
</dbReference>
<dbReference type="NCBIfam" id="TIGR01093">
    <property type="entry name" value="aroD"/>
    <property type="match status" value="1"/>
</dbReference>
<dbReference type="PANTHER" id="PTHR43699">
    <property type="entry name" value="3-DEHYDROQUINATE DEHYDRATASE"/>
    <property type="match status" value="1"/>
</dbReference>
<dbReference type="PANTHER" id="PTHR43699:SF1">
    <property type="entry name" value="3-DEHYDROQUINATE DEHYDRATASE"/>
    <property type="match status" value="1"/>
</dbReference>
<dbReference type="Pfam" id="PF01487">
    <property type="entry name" value="DHquinase_I"/>
    <property type="match status" value="1"/>
</dbReference>
<dbReference type="SUPFAM" id="SSF51569">
    <property type="entry name" value="Aldolase"/>
    <property type="match status" value="1"/>
</dbReference>
<gene>
    <name evidence="1" type="primary">aroD</name>
    <name type="ordered locus">SP_1377</name>
</gene>
<reference key="1">
    <citation type="journal article" date="2001" name="Science">
        <title>Complete genome sequence of a virulent isolate of Streptococcus pneumoniae.</title>
        <authorList>
            <person name="Tettelin H."/>
            <person name="Nelson K.E."/>
            <person name="Paulsen I.T."/>
            <person name="Eisen J.A."/>
            <person name="Read T.D."/>
            <person name="Peterson S.N."/>
            <person name="Heidelberg J.F."/>
            <person name="DeBoy R.T."/>
            <person name="Haft D.H."/>
            <person name="Dodson R.J."/>
            <person name="Durkin A.S."/>
            <person name="Gwinn M.L."/>
            <person name="Kolonay J.F."/>
            <person name="Nelson W.C."/>
            <person name="Peterson J.D."/>
            <person name="Umayam L.A."/>
            <person name="White O."/>
            <person name="Salzberg S.L."/>
            <person name="Lewis M.R."/>
            <person name="Radune D."/>
            <person name="Holtzapple E.K."/>
            <person name="Khouri H.M."/>
            <person name="Wolf A.M."/>
            <person name="Utterback T.R."/>
            <person name="Hansen C.L."/>
            <person name="McDonald L.A."/>
            <person name="Feldblyum T.V."/>
            <person name="Angiuoli S.V."/>
            <person name="Dickinson T."/>
            <person name="Hickey E.K."/>
            <person name="Holt I.E."/>
            <person name="Loftus B.J."/>
            <person name="Yang F."/>
            <person name="Smith H.O."/>
            <person name="Venter J.C."/>
            <person name="Dougherty B.A."/>
            <person name="Morrison D.A."/>
            <person name="Hollingshead S.K."/>
            <person name="Fraser C.M."/>
        </authorList>
    </citation>
    <scope>NUCLEOTIDE SEQUENCE [LARGE SCALE GENOMIC DNA]</scope>
    <source>
        <strain>ATCC BAA-334 / TIGR4</strain>
    </source>
</reference>
<proteinExistence type="evidence at protein level"/>
<organism>
    <name type="scientific">Streptococcus pneumoniae serotype 4 (strain ATCC BAA-334 / TIGR4)</name>
    <dbReference type="NCBI Taxonomy" id="170187"/>
    <lineage>
        <taxon>Bacteria</taxon>
        <taxon>Bacillati</taxon>
        <taxon>Bacillota</taxon>
        <taxon>Bacilli</taxon>
        <taxon>Lactobacillales</taxon>
        <taxon>Streptococcaceae</taxon>
        <taxon>Streptococcus</taxon>
    </lineage>
</organism>
<sequence>MKLIVSVMPRSLEEAQALDATRYLDADIIEWRADYLPKEAILQVAPAIFEKFAGRELVFTLRTRSEGGEIDLSPEEYIHLIKEVAQLYQPDYIDFEYYSYKDVFEEMLDFPNLVLSYHNFQETPENMMEILSELTILNPKLVKVAVMAHTEQDVLDLMNYTRGFKTLNPEQEYVTISMGKVGKVSRITADVTGSSWSFASLDEVSAPGQISLASMKKIREILDEA</sequence>
<evidence type="ECO:0000255" key="1">
    <source>
        <dbReference type="HAMAP-Rule" id="MF_00214"/>
    </source>
</evidence>
<feature type="chain" id="PRO_0000138816" description="3-dehydroquinate dehydratase">
    <location>
        <begin position="1"/>
        <end position="225"/>
    </location>
</feature>
<feature type="active site" description="Proton donor/acceptor" evidence="1">
    <location>
        <position position="118"/>
    </location>
</feature>
<feature type="active site" description="Schiff-base intermediate with substrate" evidence="1">
    <location>
        <position position="143"/>
    </location>
</feature>
<feature type="binding site" evidence="1">
    <location>
        <position position="6"/>
    </location>
    <ligand>
        <name>3-dehydroquinate</name>
        <dbReference type="ChEBI" id="CHEBI:32364"/>
    </ligand>
</feature>
<feature type="binding site" evidence="1">
    <location>
        <begin position="30"/>
        <end position="32"/>
    </location>
    <ligand>
        <name>3-dehydroquinate</name>
        <dbReference type="ChEBI" id="CHEBI:32364"/>
    </ligand>
</feature>
<feature type="binding site" evidence="1">
    <location>
        <position position="62"/>
    </location>
    <ligand>
        <name>3-dehydroquinate</name>
        <dbReference type="ChEBI" id="CHEBI:32364"/>
    </ligand>
</feature>
<feature type="binding site" evidence="1">
    <location>
        <position position="186"/>
    </location>
    <ligand>
        <name>3-dehydroquinate</name>
        <dbReference type="ChEBI" id="CHEBI:32364"/>
    </ligand>
</feature>
<feature type="binding site" evidence="1">
    <location>
        <position position="205"/>
    </location>
    <ligand>
        <name>3-dehydroquinate</name>
        <dbReference type="ChEBI" id="CHEBI:32364"/>
    </ligand>
</feature>
<feature type="binding site" evidence="1">
    <location>
        <position position="209"/>
    </location>
    <ligand>
        <name>3-dehydroquinate</name>
        <dbReference type="ChEBI" id="CHEBI:32364"/>
    </ligand>
</feature>